<gene>
    <name evidence="1" type="primary">rnp1</name>
    <name type="ordered locus">MJ0464</name>
</gene>
<comment type="function">
    <text evidence="1 2 3 4">Part of ribonuclease P, a protein complex that generates mature tRNA molecules by cleaving their 5'-ends.</text>
</comment>
<comment type="catalytic activity">
    <reaction evidence="1">
        <text>Endonucleolytic cleavage of RNA, removing 5'-extranucleotides from tRNA precursor.</text>
        <dbReference type="EC" id="3.1.26.5"/>
    </reaction>
</comment>
<comment type="subunit">
    <text evidence="2 3 4">Consists of a catalytic RNA component and at least 4 protein subunits. Forms a subcomplex with Rnp4 which stimulates the catalytic RNA.</text>
</comment>
<comment type="subcellular location">
    <subcellularLocation>
        <location evidence="1">Cytoplasm</location>
    </subcellularLocation>
</comment>
<comment type="similarity">
    <text evidence="1">Belongs to the eukaryotic/archaeal RNase P protein component 1 family.</text>
</comment>
<name>RNP1_METJA</name>
<reference key="1">
    <citation type="journal article" date="1996" name="Science">
        <title>Complete genome sequence of the methanogenic archaeon, Methanococcus jannaschii.</title>
        <authorList>
            <person name="Bult C.J."/>
            <person name="White O."/>
            <person name="Olsen G.J."/>
            <person name="Zhou L."/>
            <person name="Fleischmann R.D."/>
            <person name="Sutton G.G."/>
            <person name="Blake J.A."/>
            <person name="FitzGerald L.M."/>
            <person name="Clayton R.A."/>
            <person name="Gocayne J.D."/>
            <person name="Kerlavage A.R."/>
            <person name="Dougherty B.A."/>
            <person name="Tomb J.-F."/>
            <person name="Adams M.D."/>
            <person name="Reich C.I."/>
            <person name="Overbeek R."/>
            <person name="Kirkness E.F."/>
            <person name="Weinstock K.G."/>
            <person name="Merrick J.M."/>
            <person name="Glodek A."/>
            <person name="Scott J.L."/>
            <person name="Geoghagen N.S.M."/>
            <person name="Weidman J.F."/>
            <person name="Fuhrmann J.L."/>
            <person name="Nguyen D."/>
            <person name="Utterback T.R."/>
            <person name="Kelley J.M."/>
            <person name="Peterson J.D."/>
            <person name="Sadow P.W."/>
            <person name="Hanna M.C."/>
            <person name="Cotton M.D."/>
            <person name="Roberts K.M."/>
            <person name="Hurst M.A."/>
            <person name="Kaine B.P."/>
            <person name="Borodovsky M."/>
            <person name="Klenk H.-P."/>
            <person name="Fraser C.M."/>
            <person name="Smith H.O."/>
            <person name="Woese C.R."/>
            <person name="Venter J.C."/>
        </authorList>
    </citation>
    <scope>NUCLEOTIDE SEQUENCE [LARGE SCALE GENOMIC DNA]</scope>
    <source>
        <strain>ATCC 43067 / DSM 2661 / JAL-1 / JCM 10045 / NBRC 100440</strain>
    </source>
</reference>
<reference key="2">
    <citation type="journal article" date="2008" name="Nucleic Acids Res.">
        <title>Studies on Methanocaldococcus jannaschii RNase P reveal insights into the roles of RNA and protein cofactors in RNase P catalysis.</title>
        <authorList>
            <person name="Pulukkunat D.K."/>
            <person name="Gopalan V."/>
        </authorList>
    </citation>
    <scope>FUNCTION</scope>
    <scope>INTERACTION WITH RNP4</scope>
    <scope>SUBUNIT</scope>
    <source>
        <strain>ATCC 43067 / DSM 2661 / JAL-1 / JCM 10045 / NBRC 100440</strain>
    </source>
</reference>
<reference key="3">
    <citation type="journal article" date="2011" name="J. Mol. Biol.">
        <title>Cooperative RNP assembly: complementary rescue of structural defects by protein and RNA subunits of archaeal RNase P.</title>
        <authorList>
            <person name="Chen W.Y."/>
            <person name="Xu Y."/>
            <person name="Cho I.M."/>
            <person name="Oruganti S.V."/>
            <person name="Foster M.P."/>
            <person name="Gopalan V."/>
        </authorList>
    </citation>
    <scope>FUNCTION</scope>
    <scope>INTERACTION WITH RNP4</scope>
    <scope>SUBUNIT</scope>
    <source>
        <strain>ATCC 43067 / DSM 2661 / JAL-1 / JCM 10045 / NBRC 100440</strain>
    </source>
</reference>
<reference key="4">
    <citation type="journal article" date="2012" name="Nucleic Acids Res.">
        <title>Fidelity of tRNA 5'-maturation: a possible basis for the functional dependence of archaeal and eukaryal RNase P on multiple protein cofactors.</title>
        <authorList>
            <person name="Chen W.Y."/>
            <person name="Singh D."/>
            <person name="Lai L.B."/>
            <person name="Stiffler M.A."/>
            <person name="Lai H.D."/>
            <person name="Foster M.P."/>
            <person name="Gopalan V."/>
        </authorList>
    </citation>
    <scope>FUNCTION</scope>
    <scope>INTERACTION WITH RNP4</scope>
    <scope>SUBUNIT</scope>
</reference>
<accession>Q57903</accession>
<organism>
    <name type="scientific">Methanocaldococcus jannaschii (strain ATCC 43067 / DSM 2661 / JAL-1 / JCM 10045 / NBRC 100440)</name>
    <name type="common">Methanococcus jannaschii</name>
    <dbReference type="NCBI Taxonomy" id="243232"/>
    <lineage>
        <taxon>Archaea</taxon>
        <taxon>Methanobacteriati</taxon>
        <taxon>Methanobacteriota</taxon>
        <taxon>Methanomada group</taxon>
        <taxon>Methanococci</taxon>
        <taxon>Methanococcales</taxon>
        <taxon>Methanocaldococcaceae</taxon>
        <taxon>Methanocaldococcus</taxon>
    </lineage>
</organism>
<proteinExistence type="evidence at protein level"/>
<sequence>MITPHNILRHELIGLKVEIVEAKNKAMIGIKGKVVDETRNTLVIEKEDGREVVIPKDIAVFLFQLKGCKVKVDGRLLIGRPEERLKKKIKILYPY</sequence>
<evidence type="ECO:0000255" key="1">
    <source>
        <dbReference type="HAMAP-Rule" id="MF_00754"/>
    </source>
</evidence>
<evidence type="ECO:0000269" key="2">
    <source>
    </source>
</evidence>
<evidence type="ECO:0000269" key="3">
    <source>
    </source>
</evidence>
<evidence type="ECO:0000269" key="4">
    <source>
    </source>
</evidence>
<protein>
    <recommendedName>
        <fullName evidence="1">Ribonuclease P protein component 1</fullName>
        <shortName evidence="1">RNase P component 1</shortName>
        <ecNumber evidence="1">3.1.26.5</ecNumber>
    </recommendedName>
    <alternativeName>
        <fullName evidence="1">Rpp29</fullName>
    </alternativeName>
</protein>
<feature type="chain" id="PRO_0000128429" description="Ribonuclease P protein component 1">
    <location>
        <begin position="1"/>
        <end position="95"/>
    </location>
</feature>
<dbReference type="EC" id="3.1.26.5" evidence="1"/>
<dbReference type="EMBL" id="L77117">
    <property type="protein sequence ID" value="AAB98453.1"/>
    <property type="molecule type" value="Genomic_DNA"/>
</dbReference>
<dbReference type="PIR" id="H64357">
    <property type="entry name" value="H64357"/>
</dbReference>
<dbReference type="RefSeq" id="WP_010869964.1">
    <property type="nucleotide sequence ID" value="NC_000909.1"/>
</dbReference>
<dbReference type="PDB" id="6K0A">
    <property type="method" value="EM"/>
    <property type="resolution" value="4.60 A"/>
    <property type="chains" value="E/F=1-95"/>
</dbReference>
<dbReference type="PDB" id="6K0B">
    <property type="method" value="EM"/>
    <property type="resolution" value="4.30 A"/>
    <property type="chains" value="E/F=1-95"/>
</dbReference>
<dbReference type="PDBsum" id="6K0A"/>
<dbReference type="PDBsum" id="6K0B"/>
<dbReference type="EMDB" id="EMD-9900"/>
<dbReference type="SMR" id="Q57903"/>
<dbReference type="FunCoup" id="Q57903">
    <property type="interactions" value="3"/>
</dbReference>
<dbReference type="STRING" id="243232.MJ_0464"/>
<dbReference type="PaxDb" id="243232-MJ_0464"/>
<dbReference type="EnsemblBacteria" id="AAB98453">
    <property type="protein sequence ID" value="AAB98453"/>
    <property type="gene ID" value="MJ_0464"/>
</dbReference>
<dbReference type="GeneID" id="1451326"/>
<dbReference type="KEGG" id="mja:MJ_0464"/>
<dbReference type="eggNOG" id="arCOG00784">
    <property type="taxonomic scope" value="Archaea"/>
</dbReference>
<dbReference type="HOGENOM" id="CLU_107020_2_1_2"/>
<dbReference type="InParanoid" id="Q57903"/>
<dbReference type="OrthoDB" id="39019at2157"/>
<dbReference type="PhylomeDB" id="Q57903"/>
<dbReference type="Proteomes" id="UP000000805">
    <property type="component" value="Chromosome"/>
</dbReference>
<dbReference type="GO" id="GO:0005737">
    <property type="term" value="C:cytoplasm"/>
    <property type="evidence" value="ECO:0007669"/>
    <property type="project" value="UniProtKB-SubCell"/>
</dbReference>
<dbReference type="GO" id="GO:0000172">
    <property type="term" value="C:ribonuclease MRP complex"/>
    <property type="evidence" value="ECO:0007669"/>
    <property type="project" value="InterPro"/>
</dbReference>
<dbReference type="GO" id="GO:0030677">
    <property type="term" value="C:ribonuclease P complex"/>
    <property type="evidence" value="ECO:0007669"/>
    <property type="project" value="UniProtKB-UniRule"/>
</dbReference>
<dbReference type="GO" id="GO:0004526">
    <property type="term" value="F:ribonuclease P activity"/>
    <property type="evidence" value="ECO:0007669"/>
    <property type="project" value="UniProtKB-UniRule"/>
</dbReference>
<dbReference type="GO" id="GO:0033204">
    <property type="term" value="F:ribonuclease P RNA binding"/>
    <property type="evidence" value="ECO:0007669"/>
    <property type="project" value="InterPro"/>
</dbReference>
<dbReference type="GO" id="GO:0001682">
    <property type="term" value="P:tRNA 5'-leader removal"/>
    <property type="evidence" value="ECO:0007669"/>
    <property type="project" value="UniProtKB-UniRule"/>
</dbReference>
<dbReference type="Gene3D" id="2.30.30.210">
    <property type="entry name" value="Ribonuclease P/MRP, subunit p29"/>
    <property type="match status" value="1"/>
</dbReference>
<dbReference type="HAMAP" id="MF_00754">
    <property type="entry name" value="RNase_P_1"/>
    <property type="match status" value="1"/>
</dbReference>
<dbReference type="InterPro" id="IPR016848">
    <property type="entry name" value="RNase_P/MRP_Rpp29-subunit"/>
</dbReference>
<dbReference type="InterPro" id="IPR036980">
    <property type="entry name" value="RNase_P/MRP_Rpp29_sf"/>
</dbReference>
<dbReference type="InterPro" id="IPR023538">
    <property type="entry name" value="RNP1"/>
</dbReference>
<dbReference type="InterPro" id="IPR023534">
    <property type="entry name" value="Rof/RNase_P-like"/>
</dbReference>
<dbReference type="InterPro" id="IPR002730">
    <property type="entry name" value="Rpp29/RNP1"/>
</dbReference>
<dbReference type="NCBIfam" id="NF046110">
    <property type="entry name" value="RNaseP1Mthb"/>
    <property type="match status" value="1"/>
</dbReference>
<dbReference type="PANTHER" id="PTHR13348:SF0">
    <property type="entry name" value="RIBONUCLEASE P PROTEIN SUBUNIT P29"/>
    <property type="match status" value="1"/>
</dbReference>
<dbReference type="PANTHER" id="PTHR13348">
    <property type="entry name" value="RIBONUCLEASE P SUBUNIT P29"/>
    <property type="match status" value="1"/>
</dbReference>
<dbReference type="Pfam" id="PF01868">
    <property type="entry name" value="RNase_P-MRP_p29"/>
    <property type="match status" value="1"/>
</dbReference>
<dbReference type="SMART" id="SM00538">
    <property type="entry name" value="POP4"/>
    <property type="match status" value="1"/>
</dbReference>
<dbReference type="SUPFAM" id="SSF101744">
    <property type="entry name" value="Rof/RNase P subunit-like"/>
    <property type="match status" value="1"/>
</dbReference>
<keyword id="KW-0002">3D-structure</keyword>
<keyword id="KW-0963">Cytoplasm</keyword>
<keyword id="KW-0255">Endonuclease</keyword>
<keyword id="KW-0378">Hydrolase</keyword>
<keyword id="KW-0540">Nuclease</keyword>
<keyword id="KW-1185">Reference proteome</keyword>
<keyword id="KW-0819">tRNA processing</keyword>